<evidence type="ECO:0000255" key="1">
    <source>
        <dbReference type="HAMAP-Rule" id="MF_00542"/>
    </source>
</evidence>
<comment type="catalytic activity">
    <reaction evidence="1">
        <text>butanoate + ATP = butanoyl phosphate + ADP</text>
        <dbReference type="Rhea" id="RHEA:13585"/>
        <dbReference type="ChEBI" id="CHEBI:17968"/>
        <dbReference type="ChEBI" id="CHEBI:30616"/>
        <dbReference type="ChEBI" id="CHEBI:58079"/>
        <dbReference type="ChEBI" id="CHEBI:456216"/>
        <dbReference type="EC" id="2.7.2.7"/>
    </reaction>
</comment>
<comment type="subcellular location">
    <subcellularLocation>
        <location evidence="1">Cytoplasm</location>
    </subcellularLocation>
</comment>
<comment type="similarity">
    <text evidence="1">Belongs to the acetokinase family.</text>
</comment>
<proteinExistence type="inferred from homology"/>
<protein>
    <recommendedName>
        <fullName evidence="1">Probable butyrate kinase</fullName>
        <shortName evidence="1">BK</shortName>
        <ecNumber evidence="1">2.7.2.7</ecNumber>
    </recommendedName>
    <alternativeName>
        <fullName evidence="1">Branched-chain carboxylic acid kinase</fullName>
    </alternativeName>
</protein>
<dbReference type="EC" id="2.7.2.7" evidence="1"/>
<dbReference type="EMBL" id="AE017194">
    <property type="protein sequence ID" value="AAS43137.1"/>
    <property type="molecule type" value="Genomic_DNA"/>
</dbReference>
<dbReference type="SMR" id="Q731D0"/>
<dbReference type="KEGG" id="bca:BCE_4236"/>
<dbReference type="HOGENOM" id="CLU_048716_0_0_9"/>
<dbReference type="Proteomes" id="UP000002527">
    <property type="component" value="Chromosome"/>
</dbReference>
<dbReference type="GO" id="GO:0005737">
    <property type="term" value="C:cytoplasm"/>
    <property type="evidence" value="ECO:0007669"/>
    <property type="project" value="UniProtKB-SubCell"/>
</dbReference>
<dbReference type="GO" id="GO:0008776">
    <property type="term" value="F:acetate kinase activity"/>
    <property type="evidence" value="ECO:0007669"/>
    <property type="project" value="TreeGrafter"/>
</dbReference>
<dbReference type="GO" id="GO:0005524">
    <property type="term" value="F:ATP binding"/>
    <property type="evidence" value="ECO:0007669"/>
    <property type="project" value="UniProtKB-KW"/>
</dbReference>
<dbReference type="GO" id="GO:0047761">
    <property type="term" value="F:butyrate kinase activity"/>
    <property type="evidence" value="ECO:0007669"/>
    <property type="project" value="UniProtKB-UniRule"/>
</dbReference>
<dbReference type="GO" id="GO:0006083">
    <property type="term" value="P:acetate metabolic process"/>
    <property type="evidence" value="ECO:0007669"/>
    <property type="project" value="TreeGrafter"/>
</dbReference>
<dbReference type="CDD" id="cd24011">
    <property type="entry name" value="ASKHA_NBD_BK"/>
    <property type="match status" value="1"/>
</dbReference>
<dbReference type="Gene3D" id="3.30.420.40">
    <property type="match status" value="2"/>
</dbReference>
<dbReference type="HAMAP" id="MF_00542">
    <property type="entry name" value="Butyrate_kinase"/>
    <property type="match status" value="1"/>
</dbReference>
<dbReference type="InterPro" id="IPR000890">
    <property type="entry name" value="Aliphatic_acid_kin_short-chain"/>
</dbReference>
<dbReference type="InterPro" id="IPR023865">
    <property type="entry name" value="Aliphatic_acid_kinase_CS"/>
</dbReference>
<dbReference type="InterPro" id="IPR043129">
    <property type="entry name" value="ATPase_NBD"/>
</dbReference>
<dbReference type="InterPro" id="IPR011245">
    <property type="entry name" value="Butyrate_kin"/>
</dbReference>
<dbReference type="NCBIfam" id="TIGR02707">
    <property type="entry name" value="butyr_kinase"/>
    <property type="match status" value="1"/>
</dbReference>
<dbReference type="NCBIfam" id="NF002834">
    <property type="entry name" value="PRK03011.1-5"/>
    <property type="match status" value="1"/>
</dbReference>
<dbReference type="PANTHER" id="PTHR21060">
    <property type="entry name" value="ACETATE KINASE"/>
    <property type="match status" value="1"/>
</dbReference>
<dbReference type="PANTHER" id="PTHR21060:SF3">
    <property type="entry name" value="BUTYRATE KINASE 2-RELATED"/>
    <property type="match status" value="1"/>
</dbReference>
<dbReference type="Pfam" id="PF00871">
    <property type="entry name" value="Acetate_kinase"/>
    <property type="match status" value="1"/>
</dbReference>
<dbReference type="PIRSF" id="PIRSF036458">
    <property type="entry name" value="Butyrate_kin"/>
    <property type="match status" value="1"/>
</dbReference>
<dbReference type="PRINTS" id="PR00471">
    <property type="entry name" value="ACETATEKNASE"/>
</dbReference>
<dbReference type="SUPFAM" id="SSF53067">
    <property type="entry name" value="Actin-like ATPase domain"/>
    <property type="match status" value="2"/>
</dbReference>
<dbReference type="PROSITE" id="PS01075">
    <property type="entry name" value="ACETATE_KINASE_1"/>
    <property type="match status" value="1"/>
</dbReference>
<dbReference type="PROSITE" id="PS01076">
    <property type="entry name" value="ACETATE_KINASE_2"/>
    <property type="match status" value="1"/>
</dbReference>
<organism>
    <name type="scientific">Bacillus cereus (strain ATCC 10987 / NRS 248)</name>
    <dbReference type="NCBI Taxonomy" id="222523"/>
    <lineage>
        <taxon>Bacteria</taxon>
        <taxon>Bacillati</taxon>
        <taxon>Bacillota</taxon>
        <taxon>Bacilli</taxon>
        <taxon>Bacillales</taxon>
        <taxon>Bacillaceae</taxon>
        <taxon>Bacillus</taxon>
        <taxon>Bacillus cereus group</taxon>
    </lineage>
</organism>
<accession>Q731D0</accession>
<name>BUK_BACC1</name>
<sequence length="367" mass="39969">MSLNRILVINPGSTSTKIGVFDNERPVLEETIRHDEEQIGKYKRIIDQYEFRKETILEVLHSHGINISKLNAVCGRGGLLRPIEGGTYTVNDAMLEDLKNGFSGHHASNLGGILAYEIASGLNIPAFIVDPVVVDEMEPVARISGIAGMERKSIFHALNQKAVARKVAEELNHKYEDLNLLVTHMGGGITVGAHKKGKVIDVNNGLNGEGPFSPERAGTVPVGQLVEMCFSGEYYRDEMVKKLVGQGGLVSLIGTNDAIKVEQMVEKGDPEATLIYKAMAYQVAKEIGGASAVLHGKIDAIVLTGGLAYSKILVDEIKERVDWIADVIVHPGEDELQALAEGALRVLREEEAPKEYIVREKETVARG</sequence>
<keyword id="KW-0067">ATP-binding</keyword>
<keyword id="KW-0963">Cytoplasm</keyword>
<keyword id="KW-0418">Kinase</keyword>
<keyword id="KW-0547">Nucleotide-binding</keyword>
<keyword id="KW-0808">Transferase</keyword>
<reference key="1">
    <citation type="journal article" date="2004" name="Nucleic Acids Res.">
        <title>The genome sequence of Bacillus cereus ATCC 10987 reveals metabolic adaptations and a large plasmid related to Bacillus anthracis pXO1.</title>
        <authorList>
            <person name="Rasko D.A."/>
            <person name="Ravel J."/>
            <person name="Oekstad O.A."/>
            <person name="Helgason E."/>
            <person name="Cer R.Z."/>
            <person name="Jiang L."/>
            <person name="Shores K.A."/>
            <person name="Fouts D.E."/>
            <person name="Tourasse N.J."/>
            <person name="Angiuoli S.V."/>
            <person name="Kolonay J.F."/>
            <person name="Nelson W.C."/>
            <person name="Kolstoe A.-B."/>
            <person name="Fraser C.M."/>
            <person name="Read T.D."/>
        </authorList>
    </citation>
    <scope>NUCLEOTIDE SEQUENCE [LARGE SCALE GENOMIC DNA]</scope>
    <source>
        <strain>ATCC 10987 / NRS 248</strain>
    </source>
</reference>
<feature type="chain" id="PRO_1000061063" description="Probable butyrate kinase">
    <location>
        <begin position="1"/>
        <end position="367"/>
    </location>
</feature>
<gene>
    <name evidence="1" type="primary">buk</name>
    <name type="ordered locus">BCE_4236</name>
</gene>